<accession>Q7MLV0</accession>
<sequence length="350" mass="39330">MEVRHNWTHAQVRELMEMPFMDLLFEAQQVHRQYHPKNYVQVSTLLSIKTGACPEDCKYCPQSARYQTDVEKERLMEVERVLDAAQKAKNAGSTRFCMGAAWKNPKERDMPLLTDMIKGVKDMGLETCMTLGMLTPEQAKQLASAGLDYYNHNLDTSPEYYGNIITTRTYQDRLDTLSHVRDAGMKICSGGIIGMGESANDRAGLLVELANLPTHPESVPINMLVKVKGTPLETAEEVDPFDFIRLIAVARIMMPTSAVRLSAGRENMNEQMQTLCFMAGANSIFYGCKLLTTPNPSEDKDMQLFNKLGINSQQVSQKPDEITENELLDRVVESVAARPTKDDLFYDASL</sequence>
<feature type="chain" id="PRO_0000381703" description="Biotin synthase">
    <location>
        <begin position="1"/>
        <end position="350"/>
    </location>
</feature>
<feature type="domain" description="Radical SAM core" evidence="2">
    <location>
        <begin position="38"/>
        <end position="256"/>
    </location>
</feature>
<feature type="binding site" evidence="1">
    <location>
        <position position="53"/>
    </location>
    <ligand>
        <name>[4Fe-4S] cluster</name>
        <dbReference type="ChEBI" id="CHEBI:49883"/>
        <note>4Fe-4S-S-AdoMet</note>
    </ligand>
</feature>
<feature type="binding site" evidence="1">
    <location>
        <position position="57"/>
    </location>
    <ligand>
        <name>[4Fe-4S] cluster</name>
        <dbReference type="ChEBI" id="CHEBI:49883"/>
        <note>4Fe-4S-S-AdoMet</note>
    </ligand>
</feature>
<feature type="binding site" evidence="1">
    <location>
        <position position="60"/>
    </location>
    <ligand>
        <name>[4Fe-4S] cluster</name>
        <dbReference type="ChEBI" id="CHEBI:49883"/>
        <note>4Fe-4S-S-AdoMet</note>
    </ligand>
</feature>
<feature type="binding site" evidence="1">
    <location>
        <position position="97"/>
    </location>
    <ligand>
        <name>[2Fe-2S] cluster</name>
        <dbReference type="ChEBI" id="CHEBI:190135"/>
    </ligand>
</feature>
<feature type="binding site" evidence="1">
    <location>
        <position position="128"/>
    </location>
    <ligand>
        <name>[2Fe-2S] cluster</name>
        <dbReference type="ChEBI" id="CHEBI:190135"/>
    </ligand>
</feature>
<feature type="binding site" evidence="1">
    <location>
        <position position="188"/>
    </location>
    <ligand>
        <name>[2Fe-2S] cluster</name>
        <dbReference type="ChEBI" id="CHEBI:190135"/>
    </ligand>
</feature>
<feature type="binding site" evidence="1">
    <location>
        <position position="260"/>
    </location>
    <ligand>
        <name>[2Fe-2S] cluster</name>
        <dbReference type="ChEBI" id="CHEBI:190135"/>
    </ligand>
</feature>
<comment type="function">
    <text evidence="1">Catalyzes the conversion of dethiobiotin (DTB) to biotin by the insertion of a sulfur atom into dethiobiotin via a radical-based mechanism.</text>
</comment>
<comment type="catalytic activity">
    <reaction evidence="1">
        <text>(4R,5S)-dethiobiotin + (sulfur carrier)-SH + 2 reduced [2Fe-2S]-[ferredoxin] + 2 S-adenosyl-L-methionine = (sulfur carrier)-H + biotin + 2 5'-deoxyadenosine + 2 L-methionine + 2 oxidized [2Fe-2S]-[ferredoxin]</text>
        <dbReference type="Rhea" id="RHEA:22060"/>
        <dbReference type="Rhea" id="RHEA-COMP:10000"/>
        <dbReference type="Rhea" id="RHEA-COMP:10001"/>
        <dbReference type="Rhea" id="RHEA-COMP:14737"/>
        <dbReference type="Rhea" id="RHEA-COMP:14739"/>
        <dbReference type="ChEBI" id="CHEBI:17319"/>
        <dbReference type="ChEBI" id="CHEBI:29917"/>
        <dbReference type="ChEBI" id="CHEBI:33737"/>
        <dbReference type="ChEBI" id="CHEBI:33738"/>
        <dbReference type="ChEBI" id="CHEBI:57586"/>
        <dbReference type="ChEBI" id="CHEBI:57844"/>
        <dbReference type="ChEBI" id="CHEBI:59789"/>
        <dbReference type="ChEBI" id="CHEBI:64428"/>
        <dbReference type="ChEBI" id="CHEBI:149473"/>
        <dbReference type="EC" id="2.8.1.6"/>
    </reaction>
</comment>
<comment type="cofactor">
    <cofactor evidence="1">
        <name>[4Fe-4S] cluster</name>
        <dbReference type="ChEBI" id="CHEBI:49883"/>
    </cofactor>
    <text evidence="1">Binds 1 [4Fe-4S] cluster. The cluster is coordinated with 3 cysteines and an exchangeable S-adenosyl-L-methionine.</text>
</comment>
<comment type="cofactor">
    <cofactor evidence="1">
        <name>[2Fe-2S] cluster</name>
        <dbReference type="ChEBI" id="CHEBI:190135"/>
    </cofactor>
    <text evidence="1">Binds 1 [2Fe-2S] cluster. The cluster is coordinated with 3 cysteines and 1 arginine.</text>
</comment>
<comment type="pathway">
    <text evidence="1">Cofactor biosynthesis; biotin biosynthesis; biotin from 7,8-diaminononanoate: step 2/2.</text>
</comment>
<comment type="subunit">
    <text evidence="1">Homodimer.</text>
</comment>
<comment type="similarity">
    <text evidence="1">Belongs to the radical SAM superfamily. Biotin synthase family.</text>
</comment>
<comment type="sequence caution" evidence="3">
    <conflict type="erroneous initiation">
        <sequence resource="EMBL-CDS" id="BAC94091"/>
    </conflict>
</comment>
<gene>
    <name evidence="1" type="primary">bioB</name>
    <name type="ordered locus">VV1327</name>
</gene>
<organism>
    <name type="scientific">Vibrio vulnificus (strain YJ016)</name>
    <dbReference type="NCBI Taxonomy" id="196600"/>
    <lineage>
        <taxon>Bacteria</taxon>
        <taxon>Pseudomonadati</taxon>
        <taxon>Pseudomonadota</taxon>
        <taxon>Gammaproteobacteria</taxon>
        <taxon>Vibrionales</taxon>
        <taxon>Vibrionaceae</taxon>
        <taxon>Vibrio</taxon>
    </lineage>
</organism>
<protein>
    <recommendedName>
        <fullName evidence="1">Biotin synthase</fullName>
        <ecNumber evidence="1">2.8.1.6</ecNumber>
    </recommendedName>
</protein>
<name>BIOB_VIBVY</name>
<reference key="1">
    <citation type="journal article" date="2003" name="Genome Res.">
        <title>Comparative genome analysis of Vibrio vulnificus, a marine pathogen.</title>
        <authorList>
            <person name="Chen C.-Y."/>
            <person name="Wu K.-M."/>
            <person name="Chang Y.-C."/>
            <person name="Chang C.-H."/>
            <person name="Tsai H.-C."/>
            <person name="Liao T.-L."/>
            <person name="Liu Y.-M."/>
            <person name="Chen H.-J."/>
            <person name="Shen A.B.-T."/>
            <person name="Li J.-C."/>
            <person name="Su T.-L."/>
            <person name="Shao C.-P."/>
            <person name="Lee C.-T."/>
            <person name="Hor L.-I."/>
            <person name="Tsai S.-F."/>
        </authorList>
    </citation>
    <scope>NUCLEOTIDE SEQUENCE [LARGE SCALE GENOMIC DNA]</scope>
    <source>
        <strain>YJ016</strain>
    </source>
</reference>
<keyword id="KW-0001">2Fe-2S</keyword>
<keyword id="KW-0004">4Fe-4S</keyword>
<keyword id="KW-0093">Biotin biosynthesis</keyword>
<keyword id="KW-0408">Iron</keyword>
<keyword id="KW-0411">Iron-sulfur</keyword>
<keyword id="KW-0479">Metal-binding</keyword>
<keyword id="KW-0949">S-adenosyl-L-methionine</keyword>
<keyword id="KW-0808">Transferase</keyword>
<dbReference type="EC" id="2.8.1.6" evidence="1"/>
<dbReference type="EMBL" id="BA000037">
    <property type="protein sequence ID" value="BAC94091.1"/>
    <property type="status" value="ALT_INIT"/>
    <property type="molecule type" value="Genomic_DNA"/>
</dbReference>
<dbReference type="RefSeq" id="WP_011080761.1">
    <property type="nucleotide sequence ID" value="NC_005139.1"/>
</dbReference>
<dbReference type="SMR" id="Q7MLV0"/>
<dbReference type="STRING" id="672.VV93_v1c12410"/>
<dbReference type="KEGG" id="vvy:VV1327"/>
<dbReference type="eggNOG" id="COG0502">
    <property type="taxonomic scope" value="Bacteria"/>
</dbReference>
<dbReference type="HOGENOM" id="CLU_033172_2_1_6"/>
<dbReference type="UniPathway" id="UPA00078">
    <property type="reaction ID" value="UER00162"/>
</dbReference>
<dbReference type="Proteomes" id="UP000002675">
    <property type="component" value="Chromosome I"/>
</dbReference>
<dbReference type="GO" id="GO:0051537">
    <property type="term" value="F:2 iron, 2 sulfur cluster binding"/>
    <property type="evidence" value="ECO:0007669"/>
    <property type="project" value="UniProtKB-KW"/>
</dbReference>
<dbReference type="GO" id="GO:0051539">
    <property type="term" value="F:4 iron, 4 sulfur cluster binding"/>
    <property type="evidence" value="ECO:0007669"/>
    <property type="project" value="UniProtKB-KW"/>
</dbReference>
<dbReference type="GO" id="GO:0004076">
    <property type="term" value="F:biotin synthase activity"/>
    <property type="evidence" value="ECO:0007669"/>
    <property type="project" value="UniProtKB-UniRule"/>
</dbReference>
<dbReference type="GO" id="GO:0005506">
    <property type="term" value="F:iron ion binding"/>
    <property type="evidence" value="ECO:0007669"/>
    <property type="project" value="UniProtKB-UniRule"/>
</dbReference>
<dbReference type="GO" id="GO:0009102">
    <property type="term" value="P:biotin biosynthetic process"/>
    <property type="evidence" value="ECO:0007669"/>
    <property type="project" value="UniProtKB-UniRule"/>
</dbReference>
<dbReference type="CDD" id="cd01335">
    <property type="entry name" value="Radical_SAM"/>
    <property type="match status" value="1"/>
</dbReference>
<dbReference type="FunFam" id="3.20.20.70:FF:000011">
    <property type="entry name" value="Biotin synthase"/>
    <property type="match status" value="1"/>
</dbReference>
<dbReference type="Gene3D" id="3.20.20.70">
    <property type="entry name" value="Aldolase class I"/>
    <property type="match status" value="1"/>
</dbReference>
<dbReference type="HAMAP" id="MF_01694">
    <property type="entry name" value="BioB"/>
    <property type="match status" value="1"/>
</dbReference>
<dbReference type="InterPro" id="IPR013785">
    <property type="entry name" value="Aldolase_TIM"/>
</dbReference>
<dbReference type="InterPro" id="IPR010722">
    <property type="entry name" value="BATS_dom"/>
</dbReference>
<dbReference type="InterPro" id="IPR002684">
    <property type="entry name" value="Biotin_synth/BioAB"/>
</dbReference>
<dbReference type="InterPro" id="IPR024177">
    <property type="entry name" value="Biotin_synthase"/>
</dbReference>
<dbReference type="InterPro" id="IPR006638">
    <property type="entry name" value="Elp3/MiaA/NifB-like_rSAM"/>
</dbReference>
<dbReference type="InterPro" id="IPR007197">
    <property type="entry name" value="rSAM"/>
</dbReference>
<dbReference type="NCBIfam" id="TIGR00433">
    <property type="entry name" value="bioB"/>
    <property type="match status" value="1"/>
</dbReference>
<dbReference type="PANTHER" id="PTHR22976">
    <property type="entry name" value="BIOTIN SYNTHASE"/>
    <property type="match status" value="1"/>
</dbReference>
<dbReference type="PANTHER" id="PTHR22976:SF2">
    <property type="entry name" value="BIOTIN SYNTHASE, MITOCHONDRIAL"/>
    <property type="match status" value="1"/>
</dbReference>
<dbReference type="Pfam" id="PF06968">
    <property type="entry name" value="BATS"/>
    <property type="match status" value="1"/>
</dbReference>
<dbReference type="Pfam" id="PF04055">
    <property type="entry name" value="Radical_SAM"/>
    <property type="match status" value="1"/>
</dbReference>
<dbReference type="PIRSF" id="PIRSF001619">
    <property type="entry name" value="Biotin_synth"/>
    <property type="match status" value="1"/>
</dbReference>
<dbReference type="SFLD" id="SFLDF00272">
    <property type="entry name" value="biotin_synthase"/>
    <property type="match status" value="1"/>
</dbReference>
<dbReference type="SFLD" id="SFLDS00029">
    <property type="entry name" value="Radical_SAM"/>
    <property type="match status" value="1"/>
</dbReference>
<dbReference type="SMART" id="SM00876">
    <property type="entry name" value="BATS"/>
    <property type="match status" value="1"/>
</dbReference>
<dbReference type="SMART" id="SM00729">
    <property type="entry name" value="Elp3"/>
    <property type="match status" value="1"/>
</dbReference>
<dbReference type="SUPFAM" id="SSF102114">
    <property type="entry name" value="Radical SAM enzymes"/>
    <property type="match status" value="1"/>
</dbReference>
<dbReference type="PROSITE" id="PS51918">
    <property type="entry name" value="RADICAL_SAM"/>
    <property type="match status" value="1"/>
</dbReference>
<proteinExistence type="inferred from homology"/>
<evidence type="ECO:0000255" key="1">
    <source>
        <dbReference type="HAMAP-Rule" id="MF_01694"/>
    </source>
</evidence>
<evidence type="ECO:0000255" key="2">
    <source>
        <dbReference type="PROSITE-ProRule" id="PRU01266"/>
    </source>
</evidence>
<evidence type="ECO:0000305" key="3"/>